<name>TRMD_ACTP7</name>
<proteinExistence type="inferred from homology"/>
<gene>
    <name evidence="1" type="primary">trmD</name>
    <name type="ordered locus">APP7_1874</name>
</gene>
<dbReference type="EC" id="2.1.1.228" evidence="1"/>
<dbReference type="EMBL" id="CP001091">
    <property type="protein sequence ID" value="ACE62526.1"/>
    <property type="molecule type" value="Genomic_DNA"/>
</dbReference>
<dbReference type="RefSeq" id="WP_005599344.1">
    <property type="nucleotide sequence ID" value="NC_010939.1"/>
</dbReference>
<dbReference type="SMR" id="B3GZ40"/>
<dbReference type="GeneID" id="92743626"/>
<dbReference type="KEGG" id="apa:APP7_1874"/>
<dbReference type="HOGENOM" id="CLU_047363_0_1_6"/>
<dbReference type="Proteomes" id="UP000001226">
    <property type="component" value="Chromosome"/>
</dbReference>
<dbReference type="GO" id="GO:0005829">
    <property type="term" value="C:cytosol"/>
    <property type="evidence" value="ECO:0007669"/>
    <property type="project" value="TreeGrafter"/>
</dbReference>
<dbReference type="GO" id="GO:0052906">
    <property type="term" value="F:tRNA (guanine(37)-N1)-methyltransferase activity"/>
    <property type="evidence" value="ECO:0007669"/>
    <property type="project" value="UniProtKB-UniRule"/>
</dbReference>
<dbReference type="GO" id="GO:0002939">
    <property type="term" value="P:tRNA N1-guanine methylation"/>
    <property type="evidence" value="ECO:0007669"/>
    <property type="project" value="TreeGrafter"/>
</dbReference>
<dbReference type="CDD" id="cd18080">
    <property type="entry name" value="TrmD-like"/>
    <property type="match status" value="1"/>
</dbReference>
<dbReference type="FunFam" id="1.10.1270.20:FF:000001">
    <property type="entry name" value="tRNA (guanine-N(1)-)-methyltransferase"/>
    <property type="match status" value="1"/>
</dbReference>
<dbReference type="FunFam" id="3.40.1280.10:FF:000001">
    <property type="entry name" value="tRNA (guanine-N(1)-)-methyltransferase"/>
    <property type="match status" value="1"/>
</dbReference>
<dbReference type="Gene3D" id="3.40.1280.10">
    <property type="match status" value="1"/>
</dbReference>
<dbReference type="Gene3D" id="1.10.1270.20">
    <property type="entry name" value="tRNA(m1g37)methyltransferase, domain 2"/>
    <property type="match status" value="1"/>
</dbReference>
<dbReference type="HAMAP" id="MF_00605">
    <property type="entry name" value="TrmD"/>
    <property type="match status" value="1"/>
</dbReference>
<dbReference type="InterPro" id="IPR029028">
    <property type="entry name" value="Alpha/beta_knot_MTases"/>
</dbReference>
<dbReference type="InterPro" id="IPR023148">
    <property type="entry name" value="tRNA_m1G_MeTrfase_C_sf"/>
</dbReference>
<dbReference type="InterPro" id="IPR002649">
    <property type="entry name" value="tRNA_m1G_MeTrfase_TrmD"/>
</dbReference>
<dbReference type="InterPro" id="IPR029026">
    <property type="entry name" value="tRNA_m1G_MTases_N"/>
</dbReference>
<dbReference type="InterPro" id="IPR016009">
    <property type="entry name" value="tRNA_MeTrfase_TRMD/TRM10"/>
</dbReference>
<dbReference type="NCBIfam" id="NF000648">
    <property type="entry name" value="PRK00026.1"/>
    <property type="match status" value="1"/>
</dbReference>
<dbReference type="NCBIfam" id="TIGR00088">
    <property type="entry name" value="trmD"/>
    <property type="match status" value="1"/>
</dbReference>
<dbReference type="PANTHER" id="PTHR46417">
    <property type="entry name" value="TRNA (GUANINE-N(1)-)-METHYLTRANSFERASE"/>
    <property type="match status" value="1"/>
</dbReference>
<dbReference type="PANTHER" id="PTHR46417:SF1">
    <property type="entry name" value="TRNA (GUANINE-N(1)-)-METHYLTRANSFERASE"/>
    <property type="match status" value="1"/>
</dbReference>
<dbReference type="Pfam" id="PF01746">
    <property type="entry name" value="tRNA_m1G_MT"/>
    <property type="match status" value="1"/>
</dbReference>
<dbReference type="PIRSF" id="PIRSF000386">
    <property type="entry name" value="tRNA_mtase"/>
    <property type="match status" value="1"/>
</dbReference>
<dbReference type="SUPFAM" id="SSF75217">
    <property type="entry name" value="alpha/beta knot"/>
    <property type="match status" value="1"/>
</dbReference>
<accession>B3GZ40</accession>
<protein>
    <recommendedName>
        <fullName evidence="1">tRNA (guanine-N(1)-)-methyltransferase</fullName>
        <ecNumber evidence="1">2.1.1.228</ecNumber>
    </recommendedName>
    <alternativeName>
        <fullName evidence="1">M1G-methyltransferase</fullName>
    </alternativeName>
    <alternativeName>
        <fullName evidence="1">tRNA [GM37] methyltransferase</fullName>
    </alternativeName>
</protein>
<organism>
    <name type="scientific">Actinobacillus pleuropneumoniae serotype 7 (strain AP76)</name>
    <dbReference type="NCBI Taxonomy" id="537457"/>
    <lineage>
        <taxon>Bacteria</taxon>
        <taxon>Pseudomonadati</taxon>
        <taxon>Pseudomonadota</taxon>
        <taxon>Gammaproteobacteria</taxon>
        <taxon>Pasteurellales</taxon>
        <taxon>Pasteurellaceae</taxon>
        <taxon>Actinobacillus</taxon>
    </lineage>
</organism>
<keyword id="KW-0963">Cytoplasm</keyword>
<keyword id="KW-0489">Methyltransferase</keyword>
<keyword id="KW-0949">S-adenosyl-L-methionine</keyword>
<keyword id="KW-0808">Transferase</keyword>
<keyword id="KW-0819">tRNA processing</keyword>
<comment type="function">
    <text evidence="1">Specifically methylates guanosine-37 in various tRNAs.</text>
</comment>
<comment type="catalytic activity">
    <reaction evidence="1">
        <text>guanosine(37) in tRNA + S-adenosyl-L-methionine = N(1)-methylguanosine(37) in tRNA + S-adenosyl-L-homocysteine + H(+)</text>
        <dbReference type="Rhea" id="RHEA:36899"/>
        <dbReference type="Rhea" id="RHEA-COMP:10145"/>
        <dbReference type="Rhea" id="RHEA-COMP:10147"/>
        <dbReference type="ChEBI" id="CHEBI:15378"/>
        <dbReference type="ChEBI" id="CHEBI:57856"/>
        <dbReference type="ChEBI" id="CHEBI:59789"/>
        <dbReference type="ChEBI" id="CHEBI:73542"/>
        <dbReference type="ChEBI" id="CHEBI:74269"/>
        <dbReference type="EC" id="2.1.1.228"/>
    </reaction>
</comment>
<comment type="subunit">
    <text evidence="1">Homodimer.</text>
</comment>
<comment type="subcellular location">
    <subcellularLocation>
        <location evidence="1">Cytoplasm</location>
    </subcellularLocation>
</comment>
<comment type="similarity">
    <text evidence="1">Belongs to the RNA methyltransferase TrmD family.</text>
</comment>
<reference key="1">
    <citation type="submission" date="2008-06" db="EMBL/GenBank/DDBJ databases">
        <title>Genome and proteome analysis of A. pleuropneumoniae serotype 7.</title>
        <authorList>
            <person name="Linke B."/>
            <person name="Buettner F."/>
            <person name="Martinez-Arias R."/>
            <person name="Goesmann A."/>
            <person name="Baltes N."/>
            <person name="Tegetmeyer H."/>
            <person name="Singh M."/>
            <person name="Gerlach G.F."/>
        </authorList>
    </citation>
    <scope>NUCLEOTIDE SEQUENCE [LARGE SCALE GENOMIC DNA]</scope>
    <source>
        <strain>AP76</strain>
    </source>
</reference>
<evidence type="ECO:0000255" key="1">
    <source>
        <dbReference type="HAMAP-Rule" id="MF_00605"/>
    </source>
</evidence>
<feature type="chain" id="PRO_1000130124" description="tRNA (guanine-N(1)-)-methyltransferase">
    <location>
        <begin position="1"/>
        <end position="251"/>
    </location>
</feature>
<feature type="binding site" evidence="1">
    <location>
        <position position="117"/>
    </location>
    <ligand>
        <name>S-adenosyl-L-methionine</name>
        <dbReference type="ChEBI" id="CHEBI:59789"/>
    </ligand>
</feature>
<feature type="binding site" evidence="1">
    <location>
        <begin position="137"/>
        <end position="142"/>
    </location>
    <ligand>
        <name>S-adenosyl-L-methionine</name>
        <dbReference type="ChEBI" id="CHEBI:59789"/>
    </ligand>
</feature>
<sequence>MWIGIISLFPEMFKAITDFGVTGRAVKQDLLQIQCWNPRDFTFDKHKTVDDRPYGGGPGMLMMVQPLRDAIHAAKQAAKAEDGVEAKVIYLSPQGRKLDQQGVKTLASNQKLILICGRYEGVDERLIQTEVDEEWSIGDYVLTGGELPAMTLIDAVARFVPGVLGKQASADEDSFATGLLDCPHYTRPEMLDGIPVPEVLMSGHHENIRKWRLEQSLERTWLRRPELLDSLALTDEQRVLLAKIKKQHKIS</sequence>